<dbReference type="EMBL" id="CR380951">
    <property type="protein sequence ID" value="CAG58769.1"/>
    <property type="molecule type" value="Genomic_DNA"/>
</dbReference>
<dbReference type="RefSeq" id="XP_445850.1">
    <property type="nucleotide sequence ID" value="XM_445850.1"/>
</dbReference>
<dbReference type="FunCoup" id="Q6FV94">
    <property type="interactions" value="1539"/>
</dbReference>
<dbReference type="STRING" id="284593.Q6FV94"/>
<dbReference type="EnsemblFungi" id="CAGL0E03762g-T">
    <property type="protein sequence ID" value="CAGL0E03762g-T-p1"/>
    <property type="gene ID" value="CAGL0E03762g"/>
</dbReference>
<dbReference type="KEGG" id="cgr:2887304"/>
<dbReference type="CGD" id="CAL0128756">
    <property type="gene designation" value="CAGL0E03762g"/>
</dbReference>
<dbReference type="VEuPathDB" id="FungiDB:CAGL0E03762g"/>
<dbReference type="eggNOG" id="KOG1721">
    <property type="taxonomic scope" value="Eukaryota"/>
</dbReference>
<dbReference type="HOGENOM" id="CLU_029652_0_0_1"/>
<dbReference type="InParanoid" id="Q6FV94"/>
<dbReference type="Proteomes" id="UP000002428">
    <property type="component" value="Chromosome E"/>
</dbReference>
<dbReference type="GO" id="GO:0005737">
    <property type="term" value="C:cytoplasm"/>
    <property type="evidence" value="ECO:0007669"/>
    <property type="project" value="UniProtKB-SubCell"/>
</dbReference>
<dbReference type="GO" id="GO:0005634">
    <property type="term" value="C:nucleus"/>
    <property type="evidence" value="ECO:0007669"/>
    <property type="project" value="UniProtKB-SubCell"/>
</dbReference>
<dbReference type="GO" id="GO:0003677">
    <property type="term" value="F:DNA binding"/>
    <property type="evidence" value="ECO:0007669"/>
    <property type="project" value="UniProtKB-KW"/>
</dbReference>
<dbReference type="GO" id="GO:0008270">
    <property type="term" value="F:zinc ion binding"/>
    <property type="evidence" value="ECO:0007669"/>
    <property type="project" value="UniProtKB-KW"/>
</dbReference>
<dbReference type="GO" id="GO:0045944">
    <property type="term" value="P:positive regulation of transcription by RNA polymerase II"/>
    <property type="evidence" value="ECO:0007669"/>
    <property type="project" value="TreeGrafter"/>
</dbReference>
<dbReference type="FunFam" id="3.30.160.60:FF:000072">
    <property type="entry name" value="zinc finger protein 143 isoform X1"/>
    <property type="match status" value="1"/>
</dbReference>
<dbReference type="Gene3D" id="3.30.160.60">
    <property type="entry name" value="Classic Zinc Finger"/>
    <property type="match status" value="2"/>
</dbReference>
<dbReference type="InterPro" id="IPR050806">
    <property type="entry name" value="pacC/RIM101"/>
</dbReference>
<dbReference type="InterPro" id="IPR036236">
    <property type="entry name" value="Znf_C2H2_sf"/>
</dbReference>
<dbReference type="InterPro" id="IPR013087">
    <property type="entry name" value="Znf_C2H2_type"/>
</dbReference>
<dbReference type="PANTHER" id="PTHR47257">
    <property type="entry name" value="PH-RESPONSE TRANSCRIPTION FACTOR PACC/RIM101"/>
    <property type="match status" value="1"/>
</dbReference>
<dbReference type="PANTHER" id="PTHR47257:SF1">
    <property type="entry name" value="PH-RESPONSE TRANSCRIPTION FACTOR PACC_RIM101"/>
    <property type="match status" value="1"/>
</dbReference>
<dbReference type="SMART" id="SM00355">
    <property type="entry name" value="ZnF_C2H2"/>
    <property type="match status" value="3"/>
</dbReference>
<dbReference type="SUPFAM" id="SSF57667">
    <property type="entry name" value="beta-beta-alpha zinc fingers"/>
    <property type="match status" value="1"/>
</dbReference>
<dbReference type="PROSITE" id="PS00028">
    <property type="entry name" value="ZINC_FINGER_C2H2_1"/>
    <property type="match status" value="2"/>
</dbReference>
<dbReference type="PROSITE" id="PS50157">
    <property type="entry name" value="ZINC_FINGER_C2H2_2"/>
    <property type="match status" value="3"/>
</dbReference>
<name>PACC_CANGA</name>
<sequence>MYGIFYAPEKLQIRRKDREKKKYLVSHTWIVKTPLPLISGQSYININKKTKKNSNIWEFRILPETSNTSLNTAMHTMVKNGQQTPVLLGSKIEPRDSTSIKSLVNEPNTPTDMYHPKIKTEYDMTIKKESPTSTEPLKETTKDTSKDTPKETLICKWSHCYREFQQAELLYHHLCQEHVGRKSQKNLQLKCQWDNCTSKTEKRDHMTSHLRVHVPLKPFACSTCSKRFKRPQDLKKHLKIHLSDLGIDAPKKKRGPKVGSKRVNSKSFHKVSYDQVPAIGSASQPRFNHYAPMQASQPVSYEHWVQMEMPHYTPVYSPALAERVQAISAPTLYVQGFENREPVVAATQFFTRLSTNMAYQVPNIQNQHLYVPNYVGRPDNLYLHSTAHSSDNSVKTSSSSSPIETSVPTTHHTDNKRSPLPAIHYVPQSNIPLVHSHVQPHYSANEVRPLPSLSSISMVTPKYVIDQNLPKYNRTYDTFSTNQKSCADEEEEIYDSDVSDDEISDMMNKVNLSDKNANEEEYDSDEEDFIATFKRVNILKDYAICTLLEEEYDTEDEPEPVLQPNVAESKSFDAHLMTFPEILI</sequence>
<accession>Q6FV94</accession>
<gene>
    <name type="primary">RIM101</name>
    <name type="ordered locus">CAGL0E03762g</name>
</gene>
<protein>
    <recommendedName>
        <fullName>pH-response transcription factor pacC/RIM101</fullName>
    </recommendedName>
</protein>
<proteinExistence type="inferred from homology"/>
<keyword id="KW-0010">Activator</keyword>
<keyword id="KW-0963">Cytoplasm</keyword>
<keyword id="KW-0238">DNA-binding</keyword>
<keyword id="KW-0479">Metal-binding</keyword>
<keyword id="KW-0539">Nucleus</keyword>
<keyword id="KW-1185">Reference proteome</keyword>
<keyword id="KW-0677">Repeat</keyword>
<keyword id="KW-0678">Repressor</keyword>
<keyword id="KW-0804">Transcription</keyword>
<keyword id="KW-0805">Transcription regulation</keyword>
<keyword id="KW-0862">Zinc</keyword>
<keyword id="KW-0863">Zinc-finger</keyword>
<reference key="1">
    <citation type="journal article" date="2004" name="Nature">
        <title>Genome evolution in yeasts.</title>
        <authorList>
            <person name="Dujon B."/>
            <person name="Sherman D."/>
            <person name="Fischer G."/>
            <person name="Durrens P."/>
            <person name="Casaregola S."/>
            <person name="Lafontaine I."/>
            <person name="de Montigny J."/>
            <person name="Marck C."/>
            <person name="Neuveglise C."/>
            <person name="Talla E."/>
            <person name="Goffard N."/>
            <person name="Frangeul L."/>
            <person name="Aigle M."/>
            <person name="Anthouard V."/>
            <person name="Babour A."/>
            <person name="Barbe V."/>
            <person name="Barnay S."/>
            <person name="Blanchin S."/>
            <person name="Beckerich J.-M."/>
            <person name="Beyne E."/>
            <person name="Bleykasten C."/>
            <person name="Boisrame A."/>
            <person name="Boyer J."/>
            <person name="Cattolico L."/>
            <person name="Confanioleri F."/>
            <person name="de Daruvar A."/>
            <person name="Despons L."/>
            <person name="Fabre E."/>
            <person name="Fairhead C."/>
            <person name="Ferry-Dumazet H."/>
            <person name="Groppi A."/>
            <person name="Hantraye F."/>
            <person name="Hennequin C."/>
            <person name="Jauniaux N."/>
            <person name="Joyet P."/>
            <person name="Kachouri R."/>
            <person name="Kerrest A."/>
            <person name="Koszul R."/>
            <person name="Lemaire M."/>
            <person name="Lesur I."/>
            <person name="Ma L."/>
            <person name="Muller H."/>
            <person name="Nicaud J.-M."/>
            <person name="Nikolski M."/>
            <person name="Oztas S."/>
            <person name="Ozier-Kalogeropoulos O."/>
            <person name="Pellenz S."/>
            <person name="Potier S."/>
            <person name="Richard G.-F."/>
            <person name="Straub M.-L."/>
            <person name="Suleau A."/>
            <person name="Swennen D."/>
            <person name="Tekaia F."/>
            <person name="Wesolowski-Louvel M."/>
            <person name="Westhof E."/>
            <person name="Wirth B."/>
            <person name="Zeniou-Meyer M."/>
            <person name="Zivanovic Y."/>
            <person name="Bolotin-Fukuhara M."/>
            <person name="Thierry A."/>
            <person name="Bouchier C."/>
            <person name="Caudron B."/>
            <person name="Scarpelli C."/>
            <person name="Gaillardin C."/>
            <person name="Weissenbach J."/>
            <person name="Wincker P."/>
            <person name="Souciet J.-L."/>
        </authorList>
    </citation>
    <scope>NUCLEOTIDE SEQUENCE [LARGE SCALE GENOMIC DNA]</scope>
    <source>
        <strain>ATCC 2001 / BCRC 20586 / JCM 3761 / NBRC 0622 / NRRL Y-65 / CBS 138</strain>
    </source>
</reference>
<organism>
    <name type="scientific">Candida glabrata (strain ATCC 2001 / BCRC 20586 / JCM 3761 / NBRC 0622 / NRRL Y-65 / CBS 138)</name>
    <name type="common">Yeast</name>
    <name type="synonym">Nakaseomyces glabratus</name>
    <dbReference type="NCBI Taxonomy" id="284593"/>
    <lineage>
        <taxon>Eukaryota</taxon>
        <taxon>Fungi</taxon>
        <taxon>Dikarya</taxon>
        <taxon>Ascomycota</taxon>
        <taxon>Saccharomycotina</taxon>
        <taxon>Saccharomycetes</taxon>
        <taxon>Saccharomycetales</taxon>
        <taxon>Saccharomycetaceae</taxon>
        <taxon>Nakaseomyces</taxon>
    </lineage>
</organism>
<evidence type="ECO:0000250" key="1"/>
<evidence type="ECO:0000255" key="2">
    <source>
        <dbReference type="PROSITE-ProRule" id="PRU00042"/>
    </source>
</evidence>
<evidence type="ECO:0000256" key="3">
    <source>
        <dbReference type="SAM" id="MobiDB-lite"/>
    </source>
</evidence>
<evidence type="ECO:0000305" key="4"/>
<feature type="chain" id="PRO_0000046826" description="pH-response transcription factor pacC/RIM101">
    <location>
        <begin position="1"/>
        <end position="584"/>
    </location>
</feature>
<feature type="zinc finger region" description="C2H2-type 1" evidence="2">
    <location>
        <begin position="153"/>
        <end position="178"/>
    </location>
</feature>
<feature type="zinc finger region" description="C2H2-type 2" evidence="2">
    <location>
        <begin position="189"/>
        <end position="213"/>
    </location>
</feature>
<feature type="zinc finger region" description="C2H2-type 3" evidence="2">
    <location>
        <begin position="219"/>
        <end position="241"/>
    </location>
</feature>
<feature type="region of interest" description="Disordered" evidence="3">
    <location>
        <begin position="385"/>
        <end position="422"/>
    </location>
</feature>
<feature type="compositionally biased region" description="Low complexity" evidence="3">
    <location>
        <begin position="389"/>
        <end position="410"/>
    </location>
</feature>
<comment type="function">
    <text evidence="1">Transcription factor that mediates regulation of both acid- and alkaline-expressed genes in response to ambient pH. At alkaline ambient pH, activates transcription of alkaline-expressed genes (including RIM101 itself) and represses transcription of acid-expressed genes (By similarity).</text>
</comment>
<comment type="subcellular location">
    <subcellularLocation>
        <location evidence="1">Cytoplasm</location>
    </subcellularLocation>
    <subcellularLocation>
        <location evidence="1">Nucleus</location>
    </subcellularLocation>
</comment>
<comment type="PTM">
    <text evidence="1">Activated by C-terminal proteolytic cleavage by signaling protease (probably palB/RIM13) at neutral to alkaline ambient pH.</text>
</comment>
<comment type="similarity">
    <text evidence="4">Belongs to the pacC/RIM101 family.</text>
</comment>